<name>SMG_SHEB8</name>
<organism>
    <name type="scientific">Shewanella baltica (strain OS185)</name>
    <dbReference type="NCBI Taxonomy" id="402882"/>
    <lineage>
        <taxon>Bacteria</taxon>
        <taxon>Pseudomonadati</taxon>
        <taxon>Pseudomonadota</taxon>
        <taxon>Gammaproteobacteria</taxon>
        <taxon>Alteromonadales</taxon>
        <taxon>Shewanellaceae</taxon>
        <taxon>Shewanella</taxon>
    </lineage>
</organism>
<proteinExistence type="inferred from homology"/>
<comment type="similarity">
    <text evidence="1">Belongs to the Smg family.</text>
</comment>
<dbReference type="EMBL" id="CP000753">
    <property type="protein sequence ID" value="ABS06203.1"/>
    <property type="molecule type" value="Genomic_DNA"/>
</dbReference>
<dbReference type="RefSeq" id="WP_006083793.1">
    <property type="nucleotide sequence ID" value="NC_009665.1"/>
</dbReference>
<dbReference type="SMR" id="A6WHB4"/>
<dbReference type="KEGG" id="sbm:Shew185_0030"/>
<dbReference type="HOGENOM" id="CLU_133242_0_0_6"/>
<dbReference type="HAMAP" id="MF_00598">
    <property type="entry name" value="Smg"/>
    <property type="match status" value="1"/>
</dbReference>
<dbReference type="InterPro" id="IPR007456">
    <property type="entry name" value="Smg"/>
</dbReference>
<dbReference type="NCBIfam" id="NF002897">
    <property type="entry name" value="PRK03430.1"/>
    <property type="match status" value="1"/>
</dbReference>
<dbReference type="PANTHER" id="PTHR38692">
    <property type="entry name" value="PROTEIN SMG"/>
    <property type="match status" value="1"/>
</dbReference>
<dbReference type="PANTHER" id="PTHR38692:SF1">
    <property type="entry name" value="PROTEIN SMG"/>
    <property type="match status" value="1"/>
</dbReference>
<dbReference type="Pfam" id="PF04361">
    <property type="entry name" value="DUF494"/>
    <property type="match status" value="1"/>
</dbReference>
<gene>
    <name evidence="1" type="primary">smg</name>
    <name type="ordered locus">Shew185_0030</name>
</gene>
<sequence length="157" mass="18664">MFDILMYLFENYVHSEVELLVDEDELTKELTRAGFHQSEILKALTWLERLAELQEGDKPYLCNHDQHSFRIYTKDEMDKLDVESRGFLLFLEQVKVLNVETREMVIDRVMELDEPTLILEDLKWVILMVLFNAPGHESAYEQMEDLIFEQPEGRLHS</sequence>
<feature type="chain" id="PRO_1000025664" description="Protein Smg homolog">
    <location>
        <begin position="1"/>
        <end position="157"/>
    </location>
</feature>
<accession>A6WHB4</accession>
<reference key="1">
    <citation type="submission" date="2007-07" db="EMBL/GenBank/DDBJ databases">
        <title>Complete sequence of chromosome of Shewanella baltica OS185.</title>
        <authorList>
            <consortium name="US DOE Joint Genome Institute"/>
            <person name="Copeland A."/>
            <person name="Lucas S."/>
            <person name="Lapidus A."/>
            <person name="Barry K."/>
            <person name="Glavina del Rio T."/>
            <person name="Dalin E."/>
            <person name="Tice H."/>
            <person name="Pitluck S."/>
            <person name="Sims D."/>
            <person name="Brettin T."/>
            <person name="Bruce D."/>
            <person name="Detter J.C."/>
            <person name="Han C."/>
            <person name="Schmutz J."/>
            <person name="Larimer F."/>
            <person name="Land M."/>
            <person name="Hauser L."/>
            <person name="Kyrpides N."/>
            <person name="Mikhailova N."/>
            <person name="Brettar I."/>
            <person name="Rodrigues J."/>
            <person name="Konstantinidis K."/>
            <person name="Tiedje J."/>
            <person name="Richardson P."/>
        </authorList>
    </citation>
    <scope>NUCLEOTIDE SEQUENCE [LARGE SCALE GENOMIC DNA]</scope>
    <source>
        <strain>OS185</strain>
    </source>
</reference>
<evidence type="ECO:0000255" key="1">
    <source>
        <dbReference type="HAMAP-Rule" id="MF_00598"/>
    </source>
</evidence>
<protein>
    <recommendedName>
        <fullName evidence="1">Protein Smg homolog</fullName>
    </recommendedName>
</protein>